<accession>Q51083</accession>
<comment type="function">
    <text evidence="1 2">A P subtype restriction enzyme that recognizes the double-stranded sequence 5'-CATG-3' and cleaves after G-4.</text>
</comment>
<comment type="catalytic activity">
    <reaction>
        <text>Endonucleolytic cleavage of DNA to give specific double-stranded fragments with terminal 5'-phosphates.</text>
        <dbReference type="EC" id="3.1.21.4"/>
    </reaction>
</comment>
<reference key="1">
    <citation type="journal article" date="1996" name="Gene">
        <title>Molecular cloning and expression of NlaIII restriction-modification system in E. coli.</title>
        <authorList>
            <person name="Morgan R.D."/>
            <person name="Camp R.R."/>
            <person name="Wilson G.G."/>
            <person name="Xu S.-Y."/>
        </authorList>
    </citation>
    <scope>NUCLEOTIDE SEQUENCE [GENOMIC DNA]</scope>
    <scope>FUNCTION</scope>
    <source>
        <strain>ATCC 23970 / DSM 4691 / CCUG 5853 / CIP 72.17 / NCTC 10617 / NCDC A7515</strain>
    </source>
</reference>
<reference key="2">
    <citation type="journal article" date="2003" name="Nucleic Acids Res.">
        <title>A nomenclature for restriction enzymes, DNA methyltransferases, homing endonucleases and their genes.</title>
        <authorList>
            <person name="Roberts R.J."/>
            <person name="Belfort M."/>
            <person name="Bestor T."/>
            <person name="Bhagwat A.S."/>
            <person name="Bickle T.A."/>
            <person name="Bitinaite J."/>
            <person name="Blumenthal R.M."/>
            <person name="Degtyarev S.K."/>
            <person name="Dryden D.T."/>
            <person name="Dybvig K."/>
            <person name="Firman K."/>
            <person name="Gromova E.S."/>
            <person name="Gumport R.I."/>
            <person name="Halford S.E."/>
            <person name="Hattman S."/>
            <person name="Heitman J."/>
            <person name="Hornby D.P."/>
            <person name="Janulaitis A."/>
            <person name="Jeltsch A."/>
            <person name="Josephsen J."/>
            <person name="Kiss A."/>
            <person name="Klaenhammer T.R."/>
            <person name="Kobayashi I."/>
            <person name="Kong H."/>
            <person name="Krueger D.H."/>
            <person name="Lacks S."/>
            <person name="Marinus M.G."/>
            <person name="Miyahara M."/>
            <person name="Morgan R.D."/>
            <person name="Murray N.E."/>
            <person name="Nagaraja V."/>
            <person name="Piekarowicz A."/>
            <person name="Pingoud A."/>
            <person name="Raleigh E."/>
            <person name="Rao D.N."/>
            <person name="Reich N."/>
            <person name="Repin V.E."/>
            <person name="Selker E.U."/>
            <person name="Shaw P.C."/>
            <person name="Stein D.C."/>
            <person name="Stoddard B.L."/>
            <person name="Szybalski W."/>
            <person name="Trautner T.A."/>
            <person name="Van Etten J.L."/>
            <person name="Vitor J.M."/>
            <person name="Wilson G.G."/>
            <person name="Xu S.Y."/>
        </authorList>
    </citation>
    <scope>NOMENCLATURE</scope>
    <scope>SUBTYPE</scope>
</reference>
<gene>
    <name type="primary">nlaIIIR</name>
</gene>
<feature type="chain" id="PRO_0000077349" description="Type II restriction enzyme NlaIII">
    <location>
        <begin position="1"/>
        <end position="230"/>
    </location>
</feature>
<evidence type="ECO:0000303" key="1">
    <source>
    </source>
</evidence>
<evidence type="ECO:0000305" key="2">
    <source>
    </source>
</evidence>
<sequence length="230" mass="26487">MKITKTELFLRLAKPNEQGISRWVKTSEFAGEYKDLKLGNGGSWCRKDSPLARDYIVEFDKGLTSGNSIDAIRLNGFNQEKHFKQYIRKDIKDALKTRNCVMLGVNGKSENTKIEIDHKDGRKNNHRVSDIKTQKLEDFQPLCKAANDVKRQICKTCKETNKRWSAKNISGNPYAFYMGDENYSEELGCVGCYQYDPVEYRKSSVKRIAAEAAKYTSDYIFKKLYEEDNG</sequence>
<dbReference type="EC" id="3.1.21.4"/>
<dbReference type="EMBL" id="U59398">
    <property type="protein sequence ID" value="AAB41400.1"/>
    <property type="molecule type" value="Genomic_DNA"/>
</dbReference>
<dbReference type="PIR" id="JC5751">
    <property type="entry name" value="JC5751"/>
</dbReference>
<dbReference type="RefSeq" id="WP_003709319.1">
    <property type="nucleotide sequence ID" value="NZ_LR590477.1"/>
</dbReference>
<dbReference type="STRING" id="486.B2G52_01560"/>
<dbReference type="PRO" id="PR:Q51083"/>
<dbReference type="GO" id="GO:0009036">
    <property type="term" value="F:type II site-specific deoxyribonuclease activity"/>
    <property type="evidence" value="ECO:0007669"/>
    <property type="project" value="UniProtKB-EC"/>
</dbReference>
<dbReference type="GO" id="GO:0009307">
    <property type="term" value="P:DNA restriction-modification system"/>
    <property type="evidence" value="ECO:0007669"/>
    <property type="project" value="UniProtKB-KW"/>
</dbReference>
<dbReference type="InterPro" id="IPR007979">
    <property type="entry name" value="NlaIII/ICEA1"/>
</dbReference>
<dbReference type="Pfam" id="PF05315">
    <property type="entry name" value="ICEA"/>
    <property type="match status" value="1"/>
</dbReference>
<proteinExistence type="predicted"/>
<protein>
    <recommendedName>
        <fullName evidence="1">Type II restriction enzyme NlaIII</fullName>
        <shortName>R.NlaIII</shortName>
        <ecNumber>3.1.21.4</ecNumber>
    </recommendedName>
    <alternativeName>
        <fullName>Endonuclease NlaIII</fullName>
    </alternativeName>
    <alternativeName>
        <fullName>Type-2 restriction enzyme NlaIII</fullName>
    </alternativeName>
</protein>
<organism>
    <name type="scientific">Neisseria lactamica</name>
    <dbReference type="NCBI Taxonomy" id="486"/>
    <lineage>
        <taxon>Bacteria</taxon>
        <taxon>Pseudomonadati</taxon>
        <taxon>Pseudomonadota</taxon>
        <taxon>Betaproteobacteria</taxon>
        <taxon>Neisseriales</taxon>
        <taxon>Neisseriaceae</taxon>
        <taxon>Neisseria</taxon>
    </lineage>
</organism>
<name>T2N3_NEILA</name>
<keyword id="KW-0255">Endonuclease</keyword>
<keyword id="KW-0378">Hydrolase</keyword>
<keyword id="KW-0540">Nuclease</keyword>
<keyword id="KW-0680">Restriction system</keyword>